<gene>
    <name type="primary">rps0b</name>
    <name type="ORF">SJAG_02184</name>
</gene>
<organism>
    <name type="scientific">Schizosaccharomyces japonicus (strain yFS275 / FY16936)</name>
    <name type="common">Fission yeast</name>
    <dbReference type="NCBI Taxonomy" id="402676"/>
    <lineage>
        <taxon>Eukaryota</taxon>
        <taxon>Fungi</taxon>
        <taxon>Dikarya</taxon>
        <taxon>Ascomycota</taxon>
        <taxon>Taphrinomycotina</taxon>
        <taxon>Schizosaccharomycetes</taxon>
        <taxon>Schizosaccharomycetales</taxon>
        <taxon>Schizosaccharomycetaceae</taxon>
        <taxon>Schizosaccharomyces</taxon>
    </lineage>
</organism>
<keyword id="KW-0963">Cytoplasm</keyword>
<keyword id="KW-1185">Reference proteome</keyword>
<keyword id="KW-0687">Ribonucleoprotein</keyword>
<keyword id="KW-0689">Ribosomal protein</keyword>
<protein>
    <recommendedName>
        <fullName evidence="1">Small ribosomal subunit protein uS2B</fullName>
    </recommendedName>
    <alternativeName>
        <fullName evidence="3">40S ribosomal protein S0-B</fullName>
    </alternativeName>
</protein>
<name>RSSA2_SCHJY</name>
<reference key="1">
    <citation type="journal article" date="2011" name="Science">
        <title>Comparative functional genomics of the fission yeasts.</title>
        <authorList>
            <person name="Rhind N."/>
            <person name="Chen Z."/>
            <person name="Yassour M."/>
            <person name="Thompson D.A."/>
            <person name="Haas B.J."/>
            <person name="Habib N."/>
            <person name="Wapinski I."/>
            <person name="Roy S."/>
            <person name="Lin M.F."/>
            <person name="Heiman D.I."/>
            <person name="Young S.K."/>
            <person name="Furuya K."/>
            <person name="Guo Y."/>
            <person name="Pidoux A."/>
            <person name="Chen H.M."/>
            <person name="Robbertse B."/>
            <person name="Goldberg J.M."/>
            <person name="Aoki K."/>
            <person name="Bayne E.H."/>
            <person name="Berlin A.M."/>
            <person name="Desjardins C.A."/>
            <person name="Dobbs E."/>
            <person name="Dukaj L."/>
            <person name="Fan L."/>
            <person name="FitzGerald M.G."/>
            <person name="French C."/>
            <person name="Gujja S."/>
            <person name="Hansen K."/>
            <person name="Keifenheim D."/>
            <person name="Levin J.Z."/>
            <person name="Mosher R.A."/>
            <person name="Mueller C.A."/>
            <person name="Pfiffner J."/>
            <person name="Priest M."/>
            <person name="Russ C."/>
            <person name="Smialowska A."/>
            <person name="Swoboda P."/>
            <person name="Sykes S.M."/>
            <person name="Vaughn M."/>
            <person name="Vengrova S."/>
            <person name="Yoder R."/>
            <person name="Zeng Q."/>
            <person name="Allshire R."/>
            <person name="Baulcombe D."/>
            <person name="Birren B.W."/>
            <person name="Brown W."/>
            <person name="Ekwall K."/>
            <person name="Kellis M."/>
            <person name="Leatherwood J."/>
            <person name="Levin H."/>
            <person name="Margalit H."/>
            <person name="Martienssen R."/>
            <person name="Nieduszynski C.A."/>
            <person name="Spatafora J.W."/>
            <person name="Friedman N."/>
            <person name="Dalgaard J.Z."/>
            <person name="Baumann P."/>
            <person name="Niki H."/>
            <person name="Regev A."/>
            <person name="Nusbaum C."/>
        </authorList>
    </citation>
    <scope>NUCLEOTIDE SEQUENCE [LARGE SCALE GENOMIC DNA]</scope>
    <source>
        <strain>yFS275 / FY16936</strain>
    </source>
</reference>
<accession>B6K1S2</accession>
<proteinExistence type="inferred from homology"/>
<sequence>MAESVAHPSVLNATEEDIKQLLAASCHIGSKNLDVRMENYVWKRRADGVNIINIGKTWEKIVLAARVIATIENPADVCVISARPYGHRAVLKFAAHTGATAIAGRFTPGNFTNYITRTYREPRLIVVTDPRADHQAIKEASYVNIPVIALCDTDSPLAHVDIAIPTNNKGYKSIGLVWWLLAREVLRLRGALSRTAPWDIMVDMYFYRDPEAEREEEAKAVEAEAEAPAVEAAEFEPTAEGAVDPSILAAATAGQVGQSAWDEEGDWNTTGAAQTSDWANTVA</sequence>
<feature type="chain" id="PRO_0000389289" description="Small ribosomal subunit protein uS2B">
    <location>
        <begin position="1"/>
        <end position="283"/>
    </location>
</feature>
<feature type="region of interest" description="Disordered" evidence="2">
    <location>
        <begin position="254"/>
        <end position="283"/>
    </location>
</feature>
<feature type="compositionally biased region" description="Polar residues" evidence="2">
    <location>
        <begin position="267"/>
        <end position="283"/>
    </location>
</feature>
<dbReference type="EMBL" id="KE651166">
    <property type="protein sequence ID" value="EEB07103.1"/>
    <property type="molecule type" value="Genomic_DNA"/>
</dbReference>
<dbReference type="RefSeq" id="XP_002173396.1">
    <property type="nucleotide sequence ID" value="XM_002173360.2"/>
</dbReference>
<dbReference type="SMR" id="B6K1S2"/>
<dbReference type="STRING" id="402676.B6K1S2"/>
<dbReference type="EnsemblFungi" id="EEB07103">
    <property type="protein sequence ID" value="EEB07103"/>
    <property type="gene ID" value="SJAG_02184"/>
</dbReference>
<dbReference type="GeneID" id="7050159"/>
<dbReference type="JaponicusDB" id="SJAG_02184">
    <property type="gene designation" value="rps002"/>
</dbReference>
<dbReference type="VEuPathDB" id="FungiDB:SJAG_02184"/>
<dbReference type="eggNOG" id="KOG0830">
    <property type="taxonomic scope" value="Eukaryota"/>
</dbReference>
<dbReference type="HOGENOM" id="CLU_058171_0_1_1"/>
<dbReference type="OMA" id="VKNFFEP"/>
<dbReference type="OrthoDB" id="414863at2759"/>
<dbReference type="Proteomes" id="UP000001744">
    <property type="component" value="Unassembled WGS sequence"/>
</dbReference>
<dbReference type="GO" id="GO:0022627">
    <property type="term" value="C:cytosolic small ribosomal subunit"/>
    <property type="evidence" value="ECO:0000318"/>
    <property type="project" value="GO_Central"/>
</dbReference>
<dbReference type="GO" id="GO:0003735">
    <property type="term" value="F:structural constituent of ribosome"/>
    <property type="evidence" value="ECO:0000318"/>
    <property type="project" value="GO_Central"/>
</dbReference>
<dbReference type="GO" id="GO:0002181">
    <property type="term" value="P:cytoplasmic translation"/>
    <property type="evidence" value="ECO:0000318"/>
    <property type="project" value="GO_Central"/>
</dbReference>
<dbReference type="GO" id="GO:0000028">
    <property type="term" value="P:ribosomal small subunit assembly"/>
    <property type="evidence" value="ECO:0000318"/>
    <property type="project" value="GO_Central"/>
</dbReference>
<dbReference type="CDD" id="cd01425">
    <property type="entry name" value="RPS2"/>
    <property type="match status" value="1"/>
</dbReference>
<dbReference type="FunFam" id="3.40.50.10490:FF:000010">
    <property type="entry name" value="40S ribosomal protein S0"/>
    <property type="match status" value="1"/>
</dbReference>
<dbReference type="Gene3D" id="3.40.50.10490">
    <property type="entry name" value="Glucose-6-phosphate isomerase like protein, domain 1"/>
    <property type="match status" value="1"/>
</dbReference>
<dbReference type="HAMAP" id="MF_03015">
    <property type="entry name" value="Ribosomal_S2_euk"/>
    <property type="match status" value="1"/>
</dbReference>
<dbReference type="InterPro" id="IPR001865">
    <property type="entry name" value="Ribosomal_uS2"/>
</dbReference>
<dbReference type="InterPro" id="IPR018130">
    <property type="entry name" value="Ribosomal_uS2_CS"/>
</dbReference>
<dbReference type="InterPro" id="IPR027498">
    <property type="entry name" value="Ribosomal_uS2_euk"/>
</dbReference>
<dbReference type="InterPro" id="IPR005707">
    <property type="entry name" value="Ribosomal_uS2_euk/arc"/>
</dbReference>
<dbReference type="InterPro" id="IPR023591">
    <property type="entry name" value="Ribosomal_uS2_flav_dom_sf"/>
</dbReference>
<dbReference type="NCBIfam" id="TIGR01012">
    <property type="entry name" value="uS2_euk_arch"/>
    <property type="match status" value="1"/>
</dbReference>
<dbReference type="PANTHER" id="PTHR11489">
    <property type="entry name" value="40S RIBOSOMAL PROTEIN SA"/>
    <property type="match status" value="1"/>
</dbReference>
<dbReference type="Pfam" id="PF00318">
    <property type="entry name" value="Ribosomal_S2"/>
    <property type="match status" value="1"/>
</dbReference>
<dbReference type="PRINTS" id="PR00395">
    <property type="entry name" value="RIBOSOMALS2"/>
</dbReference>
<dbReference type="SUPFAM" id="SSF52313">
    <property type="entry name" value="Ribosomal protein S2"/>
    <property type="match status" value="1"/>
</dbReference>
<dbReference type="PROSITE" id="PS00963">
    <property type="entry name" value="RIBOSOMAL_S2_2"/>
    <property type="match status" value="1"/>
</dbReference>
<comment type="function">
    <text evidence="1">Required for the assembly and/or stability of the 40S ribosomal subunit. Required for the processing of the 20S rRNA-precursor to mature 18S rRNA in a late step of the maturation of 40S ribosomal subunits.</text>
</comment>
<comment type="subunit">
    <text evidence="1">Component of the small ribosomal subunit. Mature ribosomes consist of a small (40S) and a large (60S) subunit. The 40S subunit contains about 33 different proteins and 1 molecule of RNA (18S). The 60S subunit contains about 49 different proteins and 3 molecules of RNA (25S, 5.8S and 5S). Interacts with rps21.</text>
</comment>
<comment type="subcellular location">
    <subcellularLocation>
        <location evidence="1">Cytoplasm</location>
    </subcellularLocation>
</comment>
<comment type="similarity">
    <text evidence="1">Belongs to the universal ribosomal protein uS2 family.</text>
</comment>
<evidence type="ECO:0000255" key="1">
    <source>
        <dbReference type="HAMAP-Rule" id="MF_03015"/>
    </source>
</evidence>
<evidence type="ECO:0000256" key="2">
    <source>
        <dbReference type="SAM" id="MobiDB-lite"/>
    </source>
</evidence>
<evidence type="ECO:0000305" key="3"/>